<feature type="chain" id="PRO_0000402558" description="Probable carboxylesterase 13">
    <location>
        <begin position="1"/>
        <end position="329"/>
    </location>
</feature>
<feature type="short sequence motif" description="Involved in the stabilization of the negatively charged intermediate by the formation of the oxyanion hole" evidence="2">
    <location>
        <begin position="81"/>
        <end position="83"/>
    </location>
</feature>
<feature type="active site" evidence="3">
    <location>
        <position position="165"/>
    </location>
</feature>
<feature type="active site" evidence="3">
    <location>
        <position position="269"/>
    </location>
</feature>
<feature type="active site" evidence="3">
    <location>
        <position position="302"/>
    </location>
</feature>
<feature type="modified residue" description="N-acetylmethionine" evidence="6">
    <location>
        <position position="1"/>
    </location>
</feature>
<proteinExistence type="evidence at protein level"/>
<reference key="1">
    <citation type="journal article" date="2000" name="Nature">
        <title>Sequence and analysis of chromosome 3 of the plant Arabidopsis thaliana.</title>
        <authorList>
            <person name="Salanoubat M."/>
            <person name="Lemcke K."/>
            <person name="Rieger M."/>
            <person name="Ansorge W."/>
            <person name="Unseld M."/>
            <person name="Fartmann B."/>
            <person name="Valle G."/>
            <person name="Bloecker H."/>
            <person name="Perez-Alonso M."/>
            <person name="Obermaier B."/>
            <person name="Delseny M."/>
            <person name="Boutry M."/>
            <person name="Grivell L.A."/>
            <person name="Mache R."/>
            <person name="Puigdomenech P."/>
            <person name="De Simone V."/>
            <person name="Choisne N."/>
            <person name="Artiguenave F."/>
            <person name="Robert C."/>
            <person name="Brottier P."/>
            <person name="Wincker P."/>
            <person name="Cattolico L."/>
            <person name="Weissenbach J."/>
            <person name="Saurin W."/>
            <person name="Quetier F."/>
            <person name="Schaefer M."/>
            <person name="Mueller-Auer S."/>
            <person name="Gabel C."/>
            <person name="Fuchs M."/>
            <person name="Benes V."/>
            <person name="Wurmbach E."/>
            <person name="Drzonek H."/>
            <person name="Erfle H."/>
            <person name="Jordan N."/>
            <person name="Bangert S."/>
            <person name="Wiedelmann R."/>
            <person name="Kranz H."/>
            <person name="Voss H."/>
            <person name="Holland R."/>
            <person name="Brandt P."/>
            <person name="Nyakatura G."/>
            <person name="Vezzi A."/>
            <person name="D'Angelo M."/>
            <person name="Pallavicini A."/>
            <person name="Toppo S."/>
            <person name="Simionati B."/>
            <person name="Conrad A."/>
            <person name="Hornischer K."/>
            <person name="Kauer G."/>
            <person name="Loehnert T.-H."/>
            <person name="Nordsiek G."/>
            <person name="Reichelt J."/>
            <person name="Scharfe M."/>
            <person name="Schoen O."/>
            <person name="Bargues M."/>
            <person name="Terol J."/>
            <person name="Climent J."/>
            <person name="Navarro P."/>
            <person name="Collado C."/>
            <person name="Perez-Perez A."/>
            <person name="Ottenwaelder B."/>
            <person name="Duchemin D."/>
            <person name="Cooke R."/>
            <person name="Laudie M."/>
            <person name="Berger-Llauro C."/>
            <person name="Purnelle B."/>
            <person name="Masuy D."/>
            <person name="de Haan M."/>
            <person name="Maarse A.C."/>
            <person name="Alcaraz J.-P."/>
            <person name="Cottet A."/>
            <person name="Casacuberta E."/>
            <person name="Monfort A."/>
            <person name="Argiriou A."/>
            <person name="Flores M."/>
            <person name="Liguori R."/>
            <person name="Vitale D."/>
            <person name="Mannhaupt G."/>
            <person name="Haase D."/>
            <person name="Schoof H."/>
            <person name="Rudd S."/>
            <person name="Zaccaria P."/>
            <person name="Mewes H.-W."/>
            <person name="Mayer K.F.X."/>
            <person name="Kaul S."/>
            <person name="Town C.D."/>
            <person name="Koo H.L."/>
            <person name="Tallon L.J."/>
            <person name="Jenkins J."/>
            <person name="Rooney T."/>
            <person name="Rizzo M."/>
            <person name="Walts A."/>
            <person name="Utterback T."/>
            <person name="Fujii C.Y."/>
            <person name="Shea T.P."/>
            <person name="Creasy T.H."/>
            <person name="Haas B."/>
            <person name="Maiti R."/>
            <person name="Wu D."/>
            <person name="Peterson J."/>
            <person name="Van Aken S."/>
            <person name="Pai G."/>
            <person name="Militscher J."/>
            <person name="Sellers P."/>
            <person name="Gill J.E."/>
            <person name="Feldblyum T.V."/>
            <person name="Preuss D."/>
            <person name="Lin X."/>
            <person name="Nierman W.C."/>
            <person name="Salzberg S.L."/>
            <person name="White O."/>
            <person name="Venter J.C."/>
            <person name="Fraser C.M."/>
            <person name="Kaneko T."/>
            <person name="Nakamura Y."/>
            <person name="Sato S."/>
            <person name="Kato T."/>
            <person name="Asamizu E."/>
            <person name="Sasamoto S."/>
            <person name="Kimura T."/>
            <person name="Idesawa K."/>
            <person name="Kawashima K."/>
            <person name="Kishida Y."/>
            <person name="Kiyokawa C."/>
            <person name="Kohara M."/>
            <person name="Matsumoto M."/>
            <person name="Matsuno A."/>
            <person name="Muraki A."/>
            <person name="Nakayama S."/>
            <person name="Nakazaki N."/>
            <person name="Shinpo S."/>
            <person name="Takeuchi C."/>
            <person name="Wada T."/>
            <person name="Watanabe A."/>
            <person name="Yamada M."/>
            <person name="Yasuda M."/>
            <person name="Tabata S."/>
        </authorList>
    </citation>
    <scope>NUCLEOTIDE SEQUENCE [LARGE SCALE GENOMIC DNA]</scope>
    <source>
        <strain>cv. Columbia</strain>
    </source>
</reference>
<reference key="2">
    <citation type="journal article" date="2017" name="Plant J.">
        <title>Araport11: a complete reannotation of the Arabidopsis thaliana reference genome.</title>
        <authorList>
            <person name="Cheng C.Y."/>
            <person name="Krishnakumar V."/>
            <person name="Chan A.P."/>
            <person name="Thibaud-Nissen F."/>
            <person name="Schobel S."/>
            <person name="Town C.D."/>
        </authorList>
    </citation>
    <scope>GENOME REANNOTATION</scope>
    <source>
        <strain>cv. Columbia</strain>
    </source>
</reference>
<reference key="3">
    <citation type="journal article" date="2002" name="Science">
        <title>Functional annotation of a full-length Arabidopsis cDNA collection.</title>
        <authorList>
            <person name="Seki M."/>
            <person name="Narusaka M."/>
            <person name="Kamiya A."/>
            <person name="Ishida J."/>
            <person name="Satou M."/>
            <person name="Sakurai T."/>
            <person name="Nakajima M."/>
            <person name="Enju A."/>
            <person name="Akiyama K."/>
            <person name="Oono Y."/>
            <person name="Muramatsu M."/>
            <person name="Hayashizaki Y."/>
            <person name="Kawai J."/>
            <person name="Carninci P."/>
            <person name="Itoh M."/>
            <person name="Ishii Y."/>
            <person name="Arakawa T."/>
            <person name="Shibata K."/>
            <person name="Shinagawa A."/>
            <person name="Shinozaki K."/>
        </authorList>
    </citation>
    <scope>NUCLEOTIDE SEQUENCE [LARGE SCALE MRNA]</scope>
    <source>
        <strain>cv. Columbia</strain>
    </source>
</reference>
<reference key="4">
    <citation type="journal article" date="2003" name="Science">
        <title>Empirical analysis of transcriptional activity in the Arabidopsis genome.</title>
        <authorList>
            <person name="Yamada K."/>
            <person name="Lim J."/>
            <person name="Dale J.M."/>
            <person name="Chen H."/>
            <person name="Shinn P."/>
            <person name="Palm C.J."/>
            <person name="Southwick A.M."/>
            <person name="Wu H.C."/>
            <person name="Kim C.J."/>
            <person name="Nguyen M."/>
            <person name="Pham P.K."/>
            <person name="Cheuk R.F."/>
            <person name="Karlin-Newmann G."/>
            <person name="Liu S.X."/>
            <person name="Lam B."/>
            <person name="Sakano H."/>
            <person name="Wu T."/>
            <person name="Yu G."/>
            <person name="Miranda M."/>
            <person name="Quach H.L."/>
            <person name="Tripp M."/>
            <person name="Chang C.H."/>
            <person name="Lee J.M."/>
            <person name="Toriumi M.J."/>
            <person name="Chan M.M."/>
            <person name="Tang C.C."/>
            <person name="Onodera C.S."/>
            <person name="Deng J.M."/>
            <person name="Akiyama K."/>
            <person name="Ansari Y."/>
            <person name="Arakawa T."/>
            <person name="Banh J."/>
            <person name="Banno F."/>
            <person name="Bowser L."/>
            <person name="Brooks S.Y."/>
            <person name="Carninci P."/>
            <person name="Chao Q."/>
            <person name="Choy N."/>
            <person name="Enju A."/>
            <person name="Goldsmith A.D."/>
            <person name="Gurjal M."/>
            <person name="Hansen N.F."/>
            <person name="Hayashizaki Y."/>
            <person name="Johnson-Hopson C."/>
            <person name="Hsuan V.W."/>
            <person name="Iida K."/>
            <person name="Karnes M."/>
            <person name="Khan S."/>
            <person name="Koesema E."/>
            <person name="Ishida J."/>
            <person name="Jiang P.X."/>
            <person name="Jones T."/>
            <person name="Kawai J."/>
            <person name="Kamiya A."/>
            <person name="Meyers C."/>
            <person name="Nakajima M."/>
            <person name="Narusaka M."/>
            <person name="Seki M."/>
            <person name="Sakurai T."/>
            <person name="Satou M."/>
            <person name="Tamse R."/>
            <person name="Vaysberg M."/>
            <person name="Wallender E.K."/>
            <person name="Wong C."/>
            <person name="Yamamura Y."/>
            <person name="Yuan S."/>
            <person name="Shinozaki K."/>
            <person name="Davis R.W."/>
            <person name="Theologis A."/>
            <person name="Ecker J.R."/>
        </authorList>
    </citation>
    <scope>NUCLEOTIDE SEQUENCE [LARGE SCALE MRNA]</scope>
    <source>
        <strain>cv. Columbia</strain>
    </source>
</reference>
<reference key="5">
    <citation type="journal article" date="2003" name="J. Mol. Evol.">
        <title>The carboxylesterase gene family from Arabidopsis thaliana.</title>
        <authorList>
            <person name="Marshall S.D."/>
            <person name="Putterill J.J."/>
            <person name="Plummer K.M."/>
            <person name="Newcomb R.D."/>
        </authorList>
    </citation>
    <scope>TISSUE SPECIFICITY</scope>
    <scope>GENE FAMILY</scope>
    <scope>NOMENCLATURE</scope>
</reference>
<reference key="6">
    <citation type="journal article" date="2012" name="Mol. Cell. Proteomics">
        <title>Comparative large-scale characterisation of plant vs. mammal proteins reveals similar and idiosyncratic N-alpha acetylation features.</title>
        <authorList>
            <person name="Bienvenut W.V."/>
            <person name="Sumpton D."/>
            <person name="Martinez A."/>
            <person name="Lilla S."/>
            <person name="Espagne C."/>
            <person name="Meinnel T."/>
            <person name="Giglione C."/>
        </authorList>
    </citation>
    <scope>ACETYLATION [LARGE SCALE ANALYSIS] AT MET-1</scope>
    <scope>IDENTIFICATION BY MASS SPECTROMETRY [LARGE SCALE ANALYSIS]</scope>
</reference>
<name>CXE13_ARATH</name>
<dbReference type="EC" id="3.1.1.1"/>
<dbReference type="EMBL" id="AL133315">
    <property type="protein sequence ID" value="CAB62359.1"/>
    <property type="molecule type" value="Genomic_DNA"/>
</dbReference>
<dbReference type="EMBL" id="CP002686">
    <property type="protein sequence ID" value="AEE78447.1"/>
    <property type="molecule type" value="Genomic_DNA"/>
</dbReference>
<dbReference type="EMBL" id="AK118967">
    <property type="protein sequence ID" value="BAC43544.1"/>
    <property type="molecule type" value="mRNA"/>
</dbReference>
<dbReference type="EMBL" id="BT005425">
    <property type="protein sequence ID" value="AAO63845.1"/>
    <property type="molecule type" value="mRNA"/>
</dbReference>
<dbReference type="PIR" id="T46214">
    <property type="entry name" value="T46214"/>
</dbReference>
<dbReference type="RefSeq" id="NP_190439.1">
    <property type="nucleotide sequence ID" value="NM_114729.3"/>
</dbReference>
<dbReference type="SMR" id="Q9SMM9"/>
<dbReference type="BioGRID" id="9349">
    <property type="interactions" value="1"/>
</dbReference>
<dbReference type="FunCoup" id="Q9SMM9">
    <property type="interactions" value="72"/>
</dbReference>
<dbReference type="IntAct" id="Q9SMM9">
    <property type="interactions" value="1"/>
</dbReference>
<dbReference type="STRING" id="3702.Q9SMM9"/>
<dbReference type="ESTHER" id="arath-CXE13">
    <property type="family name" value="Plant_carboxylesterase"/>
</dbReference>
<dbReference type="MEROPS" id="S09.A13"/>
<dbReference type="iPTMnet" id="Q9SMM9"/>
<dbReference type="PaxDb" id="3702-AT3G48700.1"/>
<dbReference type="ProteomicsDB" id="220512"/>
<dbReference type="EnsemblPlants" id="AT3G48700.1">
    <property type="protein sequence ID" value="AT3G48700.1"/>
    <property type="gene ID" value="AT3G48700"/>
</dbReference>
<dbReference type="GeneID" id="824031"/>
<dbReference type="Gramene" id="AT3G48700.1">
    <property type="protein sequence ID" value="AT3G48700.1"/>
    <property type="gene ID" value="AT3G48700"/>
</dbReference>
<dbReference type="KEGG" id="ath:AT3G48700"/>
<dbReference type="Araport" id="AT3G48700"/>
<dbReference type="TAIR" id="AT3G48700">
    <property type="gene designation" value="CXE13"/>
</dbReference>
<dbReference type="eggNOG" id="KOG1515">
    <property type="taxonomic scope" value="Eukaryota"/>
</dbReference>
<dbReference type="HOGENOM" id="CLU_012494_22_0_1"/>
<dbReference type="InParanoid" id="Q9SMM9"/>
<dbReference type="OMA" id="PDTEKAH"/>
<dbReference type="OrthoDB" id="408631at2759"/>
<dbReference type="PhylomeDB" id="Q9SMM9"/>
<dbReference type="BioCyc" id="ARA:AT3G48700-MONOMER"/>
<dbReference type="PRO" id="PR:Q9SMM9"/>
<dbReference type="Proteomes" id="UP000006548">
    <property type="component" value="Chromosome 3"/>
</dbReference>
<dbReference type="ExpressionAtlas" id="Q9SMM9">
    <property type="expression patterns" value="baseline and differential"/>
</dbReference>
<dbReference type="GO" id="GO:0005829">
    <property type="term" value="C:cytosol"/>
    <property type="evidence" value="ECO:0007005"/>
    <property type="project" value="TAIR"/>
</dbReference>
<dbReference type="GO" id="GO:0106435">
    <property type="term" value="F:carboxylesterase activity"/>
    <property type="evidence" value="ECO:0007669"/>
    <property type="project" value="UniProtKB-EC"/>
</dbReference>
<dbReference type="FunFam" id="3.40.50.1820:FF:000376">
    <property type="entry name" value="Probable carboxylesterase 12"/>
    <property type="match status" value="1"/>
</dbReference>
<dbReference type="Gene3D" id="3.40.50.1820">
    <property type="entry name" value="alpha/beta hydrolase"/>
    <property type="match status" value="1"/>
</dbReference>
<dbReference type="InterPro" id="IPR013094">
    <property type="entry name" value="AB_hydrolase_3"/>
</dbReference>
<dbReference type="InterPro" id="IPR029058">
    <property type="entry name" value="AB_hydrolase_fold"/>
</dbReference>
<dbReference type="InterPro" id="IPR050466">
    <property type="entry name" value="Carboxylest/Gibb_receptor"/>
</dbReference>
<dbReference type="InterPro" id="IPR033140">
    <property type="entry name" value="Lipase_GDXG_put_SER_AS"/>
</dbReference>
<dbReference type="PANTHER" id="PTHR23024">
    <property type="entry name" value="ARYLACETAMIDE DEACETYLASE"/>
    <property type="match status" value="1"/>
</dbReference>
<dbReference type="PANTHER" id="PTHR23024:SF467">
    <property type="entry name" value="CARBOXYLESTERASE 12-RELATED"/>
    <property type="match status" value="1"/>
</dbReference>
<dbReference type="Pfam" id="PF07859">
    <property type="entry name" value="Abhydrolase_3"/>
    <property type="match status" value="1"/>
</dbReference>
<dbReference type="SUPFAM" id="SSF53474">
    <property type="entry name" value="alpha/beta-Hydrolases"/>
    <property type="match status" value="1"/>
</dbReference>
<dbReference type="PROSITE" id="PS01174">
    <property type="entry name" value="LIPASE_GDXG_SER"/>
    <property type="match status" value="1"/>
</dbReference>
<gene>
    <name type="primary">CXE13</name>
    <name type="ordered locus">At3g48700</name>
    <name type="ORF">T8P19.210</name>
</gene>
<organism>
    <name type="scientific">Arabidopsis thaliana</name>
    <name type="common">Mouse-ear cress</name>
    <dbReference type="NCBI Taxonomy" id="3702"/>
    <lineage>
        <taxon>Eukaryota</taxon>
        <taxon>Viridiplantae</taxon>
        <taxon>Streptophyta</taxon>
        <taxon>Embryophyta</taxon>
        <taxon>Tracheophyta</taxon>
        <taxon>Spermatophyta</taxon>
        <taxon>Magnoliopsida</taxon>
        <taxon>eudicotyledons</taxon>
        <taxon>Gunneridae</taxon>
        <taxon>Pentapetalae</taxon>
        <taxon>rosids</taxon>
        <taxon>malvids</taxon>
        <taxon>Brassicales</taxon>
        <taxon>Brassicaceae</taxon>
        <taxon>Camelineae</taxon>
        <taxon>Arabidopsis</taxon>
    </lineage>
</organism>
<sequence>MDSEIAADYSPMLIIYKSGRIERLVGETTVPPSSNPQNGVVSKDVVYSPDNNLSLRIYLPEKAATAETEASVKLPLLVYFHGGGFLVETAFSPTYHTFLTAAVSASDCVAVSVDYRRAPEHPIPTSYDDSWTALKWVFSHIAGSGSEDWLNKHADFSKVFLAGDSAGANITHHMTMKAAKDKLSPESLNESGISGIILVHPYFWSKTPVDDKETTDVAIRTWIESVWTLASPNSKDGSDDPFINVVQSESVDLSGLGCGKVLVMVAEKDALVRQGWGYWEKLGKSRWNGEVLDVVETKGEGHVFHLRDPNSEKAHELVHRFAGFIKGDK</sequence>
<protein>
    <recommendedName>
        <fullName>Probable carboxylesterase 13</fullName>
    </recommendedName>
    <alternativeName>
        <fullName>AtCXE13</fullName>
        <ecNumber>3.1.1.1</ecNumber>
    </alternativeName>
</protein>
<accession>Q9SMM9</accession>
<comment type="function">
    <text evidence="1">Carboxylesterase acting on esters with varying acyl chain length.</text>
</comment>
<comment type="catalytic activity">
    <reaction>
        <text>a carboxylic ester + H2O = an alcohol + a carboxylate + H(+)</text>
        <dbReference type="Rhea" id="RHEA:21164"/>
        <dbReference type="ChEBI" id="CHEBI:15377"/>
        <dbReference type="ChEBI" id="CHEBI:15378"/>
        <dbReference type="ChEBI" id="CHEBI:29067"/>
        <dbReference type="ChEBI" id="CHEBI:30879"/>
        <dbReference type="ChEBI" id="CHEBI:33308"/>
        <dbReference type="EC" id="3.1.1.1"/>
    </reaction>
</comment>
<comment type="tissue specificity">
    <text evidence="4">Expressed in flowers.</text>
</comment>
<comment type="similarity">
    <text evidence="5">Belongs to the 'GDXG' lipolytic enzyme family.</text>
</comment>
<keyword id="KW-0007">Acetylation</keyword>
<keyword id="KW-0378">Hydrolase</keyword>
<keyword id="KW-1185">Reference proteome</keyword>
<keyword id="KW-0719">Serine esterase</keyword>
<evidence type="ECO:0000250" key="1"/>
<evidence type="ECO:0000250" key="2">
    <source>
        <dbReference type="UniProtKB" id="Q5NUF3"/>
    </source>
</evidence>
<evidence type="ECO:0000255" key="3">
    <source>
        <dbReference type="PROSITE-ProRule" id="PRU10038"/>
    </source>
</evidence>
<evidence type="ECO:0000269" key="4">
    <source>
    </source>
</evidence>
<evidence type="ECO:0000305" key="5"/>
<evidence type="ECO:0007744" key="6">
    <source>
    </source>
</evidence>